<reference key="1">
    <citation type="journal article" date="1993" name="Mol. Microbiol.">
        <title>Bacillus subtilis genome project: cloning and sequencing of the 97 kb region from 325 degrees to 333 degrees.</title>
        <authorList>
            <person name="Glaser P."/>
            <person name="Kunst F."/>
            <person name="Arnaud M."/>
            <person name="Coudart M.P."/>
            <person name="Gonzales W."/>
            <person name="Hullo M.-F."/>
            <person name="Ionescu M."/>
            <person name="Lubochinsky B."/>
            <person name="Marcelino L."/>
            <person name="Moszer I."/>
            <person name="Presecan E."/>
            <person name="Santana M."/>
            <person name="Schneider E."/>
            <person name="Schweizer J."/>
            <person name="Vertes A."/>
            <person name="Rapoport G."/>
            <person name="Danchin A."/>
        </authorList>
    </citation>
    <scope>NUCLEOTIDE SEQUENCE [GENOMIC DNA]</scope>
    <source>
        <strain>168</strain>
    </source>
</reference>
<reference key="2">
    <citation type="journal article" date="1997" name="Nature">
        <title>The complete genome sequence of the Gram-positive bacterium Bacillus subtilis.</title>
        <authorList>
            <person name="Kunst F."/>
            <person name="Ogasawara N."/>
            <person name="Moszer I."/>
            <person name="Albertini A.M."/>
            <person name="Alloni G."/>
            <person name="Azevedo V."/>
            <person name="Bertero M.G."/>
            <person name="Bessieres P."/>
            <person name="Bolotin A."/>
            <person name="Borchert S."/>
            <person name="Borriss R."/>
            <person name="Boursier L."/>
            <person name="Brans A."/>
            <person name="Braun M."/>
            <person name="Brignell S.C."/>
            <person name="Bron S."/>
            <person name="Brouillet S."/>
            <person name="Bruschi C.V."/>
            <person name="Caldwell B."/>
            <person name="Capuano V."/>
            <person name="Carter N.M."/>
            <person name="Choi S.-K."/>
            <person name="Codani J.-J."/>
            <person name="Connerton I.F."/>
            <person name="Cummings N.J."/>
            <person name="Daniel R.A."/>
            <person name="Denizot F."/>
            <person name="Devine K.M."/>
            <person name="Duesterhoeft A."/>
            <person name="Ehrlich S.D."/>
            <person name="Emmerson P.T."/>
            <person name="Entian K.-D."/>
            <person name="Errington J."/>
            <person name="Fabret C."/>
            <person name="Ferrari E."/>
            <person name="Foulger D."/>
            <person name="Fritz C."/>
            <person name="Fujita M."/>
            <person name="Fujita Y."/>
            <person name="Fuma S."/>
            <person name="Galizzi A."/>
            <person name="Galleron N."/>
            <person name="Ghim S.-Y."/>
            <person name="Glaser P."/>
            <person name="Goffeau A."/>
            <person name="Golightly E.J."/>
            <person name="Grandi G."/>
            <person name="Guiseppi G."/>
            <person name="Guy B.J."/>
            <person name="Haga K."/>
            <person name="Haiech J."/>
            <person name="Harwood C.R."/>
            <person name="Henaut A."/>
            <person name="Hilbert H."/>
            <person name="Holsappel S."/>
            <person name="Hosono S."/>
            <person name="Hullo M.-F."/>
            <person name="Itaya M."/>
            <person name="Jones L.-M."/>
            <person name="Joris B."/>
            <person name="Karamata D."/>
            <person name="Kasahara Y."/>
            <person name="Klaerr-Blanchard M."/>
            <person name="Klein C."/>
            <person name="Kobayashi Y."/>
            <person name="Koetter P."/>
            <person name="Koningstein G."/>
            <person name="Krogh S."/>
            <person name="Kumano M."/>
            <person name="Kurita K."/>
            <person name="Lapidus A."/>
            <person name="Lardinois S."/>
            <person name="Lauber J."/>
            <person name="Lazarevic V."/>
            <person name="Lee S.-M."/>
            <person name="Levine A."/>
            <person name="Liu H."/>
            <person name="Masuda S."/>
            <person name="Mauel C."/>
            <person name="Medigue C."/>
            <person name="Medina N."/>
            <person name="Mellado R.P."/>
            <person name="Mizuno M."/>
            <person name="Moestl D."/>
            <person name="Nakai S."/>
            <person name="Noback M."/>
            <person name="Noone D."/>
            <person name="O'Reilly M."/>
            <person name="Ogawa K."/>
            <person name="Ogiwara A."/>
            <person name="Oudega B."/>
            <person name="Park S.-H."/>
            <person name="Parro V."/>
            <person name="Pohl T.M."/>
            <person name="Portetelle D."/>
            <person name="Porwollik S."/>
            <person name="Prescott A.M."/>
            <person name="Presecan E."/>
            <person name="Pujic P."/>
            <person name="Purnelle B."/>
            <person name="Rapoport G."/>
            <person name="Rey M."/>
            <person name="Reynolds S."/>
            <person name="Rieger M."/>
            <person name="Rivolta C."/>
            <person name="Rocha E."/>
            <person name="Roche B."/>
            <person name="Rose M."/>
            <person name="Sadaie Y."/>
            <person name="Sato T."/>
            <person name="Scanlan E."/>
            <person name="Schleich S."/>
            <person name="Schroeter R."/>
            <person name="Scoffone F."/>
            <person name="Sekiguchi J."/>
            <person name="Sekowska A."/>
            <person name="Seror S.J."/>
            <person name="Serror P."/>
            <person name="Shin B.-S."/>
            <person name="Soldo B."/>
            <person name="Sorokin A."/>
            <person name="Tacconi E."/>
            <person name="Takagi T."/>
            <person name="Takahashi H."/>
            <person name="Takemaru K."/>
            <person name="Takeuchi M."/>
            <person name="Tamakoshi A."/>
            <person name="Tanaka T."/>
            <person name="Terpstra P."/>
            <person name="Tognoni A."/>
            <person name="Tosato V."/>
            <person name="Uchiyama S."/>
            <person name="Vandenbol M."/>
            <person name="Vannier F."/>
            <person name="Vassarotti A."/>
            <person name="Viari A."/>
            <person name="Wambutt R."/>
            <person name="Wedler E."/>
            <person name="Wedler H."/>
            <person name="Weitzenegger T."/>
            <person name="Winters P."/>
            <person name="Wipat A."/>
            <person name="Yamamoto H."/>
            <person name="Yamane K."/>
            <person name="Yasumoto K."/>
            <person name="Yata K."/>
            <person name="Yoshida K."/>
            <person name="Yoshikawa H.-F."/>
            <person name="Zumstein E."/>
            <person name="Yoshikawa H."/>
            <person name="Danchin A."/>
        </authorList>
    </citation>
    <scope>NUCLEOTIDE SEQUENCE [LARGE SCALE GENOMIC DNA]</scope>
    <source>
        <strain>168</strain>
    </source>
</reference>
<reference key="3">
    <citation type="journal article" date="2009" name="Microbiology">
        <title>From a consortium sequence to a unified sequence: the Bacillus subtilis 168 reference genome a decade later.</title>
        <authorList>
            <person name="Barbe V."/>
            <person name="Cruveiller S."/>
            <person name="Kunst F."/>
            <person name="Lenoble P."/>
            <person name="Meurice G."/>
            <person name="Sekowska A."/>
            <person name="Vallenet D."/>
            <person name="Wang T."/>
            <person name="Moszer I."/>
            <person name="Medigue C."/>
            <person name="Danchin A."/>
        </authorList>
    </citation>
    <scope>SEQUENCE REVISION TO 162</scope>
</reference>
<reference key="4">
    <citation type="journal article" date="2005" name="Microbiol. Mol. Biol. Rev.">
        <title>The TetR family of transcriptional repressors.</title>
        <authorList>
            <person name="Ramos J.L."/>
            <person name="Martinez-Bueno M."/>
            <person name="Molina-Henares A.J."/>
            <person name="Teran W."/>
            <person name="Watanabe K."/>
            <person name="Zhang X."/>
            <person name="Gallegos M.T."/>
            <person name="Brennan R."/>
            <person name="Tobes R."/>
        </authorList>
    </citation>
    <scope>REVIEW</scope>
    <scope>GENE FAMILY</scope>
</reference>
<sequence length="223" mass="26131">MKKNKFQIKREATFESFIDAGVNLLIDRAYDPVSVEDISRAAGYSKGAFYVHFVSKDDFLLYLLEKRQMKKKIIIGYLDQMERESVKSLTLDEAAKHAAELLYSYYINKPSWDITSFAMNMPTYKVLKKCKAYVRLYELWVEENVLYIKWLKERKLIDACIDPEYTAKIICAVLDGIIKQSYVLGQPATFRSFLDALSVFFTLDREHERPRILKSFSESEEHQ</sequence>
<dbReference type="EMBL" id="X73124">
    <property type="protein sequence ID" value="CAA51589.1"/>
    <property type="molecule type" value="Genomic_DNA"/>
</dbReference>
<dbReference type="EMBL" id="AL009126">
    <property type="protein sequence ID" value="CAB15848.2"/>
    <property type="molecule type" value="Genomic_DNA"/>
</dbReference>
<dbReference type="PIR" id="S39688">
    <property type="entry name" value="S39688"/>
</dbReference>
<dbReference type="SMR" id="P39601"/>
<dbReference type="FunCoup" id="P39601">
    <property type="interactions" value="97"/>
</dbReference>
<dbReference type="STRING" id="224308.BSU38220"/>
<dbReference type="PaxDb" id="224308-BSU38220"/>
<dbReference type="EnsemblBacteria" id="CAB15848">
    <property type="protein sequence ID" value="CAB15848"/>
    <property type="gene ID" value="BSU_38220"/>
</dbReference>
<dbReference type="GeneID" id="937314"/>
<dbReference type="KEGG" id="bsu:BSU38220"/>
<dbReference type="PATRIC" id="fig|224308.179.peg.4137"/>
<dbReference type="eggNOG" id="COG1309">
    <property type="taxonomic scope" value="Bacteria"/>
</dbReference>
<dbReference type="InParanoid" id="P39601"/>
<dbReference type="OrthoDB" id="9815924at2"/>
<dbReference type="BioCyc" id="BSUB:BSU38220-MONOMER"/>
<dbReference type="Proteomes" id="UP000001570">
    <property type="component" value="Chromosome"/>
</dbReference>
<dbReference type="GO" id="GO:0032993">
    <property type="term" value="C:protein-DNA complex"/>
    <property type="evidence" value="ECO:0000318"/>
    <property type="project" value="GO_Central"/>
</dbReference>
<dbReference type="GO" id="GO:0003677">
    <property type="term" value="F:DNA binding"/>
    <property type="evidence" value="ECO:0007669"/>
    <property type="project" value="UniProtKB-KW"/>
</dbReference>
<dbReference type="GO" id="GO:0003700">
    <property type="term" value="F:DNA-binding transcription factor activity"/>
    <property type="evidence" value="ECO:0000318"/>
    <property type="project" value="GO_Central"/>
</dbReference>
<dbReference type="Gene3D" id="1.10.357.10">
    <property type="entry name" value="Tetracycline Repressor, domain 2"/>
    <property type="match status" value="1"/>
</dbReference>
<dbReference type="InterPro" id="IPR009057">
    <property type="entry name" value="Homeodomain-like_sf"/>
</dbReference>
<dbReference type="InterPro" id="IPR050624">
    <property type="entry name" value="HTH-type_Tx_Regulator"/>
</dbReference>
<dbReference type="InterPro" id="IPR001647">
    <property type="entry name" value="HTH_TetR"/>
</dbReference>
<dbReference type="InterPro" id="IPR036271">
    <property type="entry name" value="Tet_transcr_reg_TetR-rel_C_sf"/>
</dbReference>
<dbReference type="PANTHER" id="PTHR43479">
    <property type="entry name" value="ACREF/ENVCD OPERON REPRESSOR-RELATED"/>
    <property type="match status" value="1"/>
</dbReference>
<dbReference type="PANTHER" id="PTHR43479:SF11">
    <property type="entry name" value="ACREF_ENVCD OPERON REPRESSOR-RELATED"/>
    <property type="match status" value="1"/>
</dbReference>
<dbReference type="Pfam" id="PF00440">
    <property type="entry name" value="TetR_N"/>
    <property type="match status" value="1"/>
</dbReference>
<dbReference type="PRINTS" id="PR00455">
    <property type="entry name" value="HTHTETR"/>
</dbReference>
<dbReference type="SUPFAM" id="SSF46689">
    <property type="entry name" value="Homeodomain-like"/>
    <property type="match status" value="1"/>
</dbReference>
<dbReference type="SUPFAM" id="SSF48498">
    <property type="entry name" value="Tetracyclin repressor-like, C-terminal domain"/>
    <property type="match status" value="1"/>
</dbReference>
<dbReference type="PROSITE" id="PS50977">
    <property type="entry name" value="HTH_TETR_2"/>
    <property type="match status" value="1"/>
</dbReference>
<feature type="chain" id="PRO_0000070654" description="Uncharacterized HTH-type transcriptional regulator YwcC">
    <location>
        <begin position="1"/>
        <end position="223"/>
    </location>
</feature>
<feature type="domain" description="HTH tetR-type" evidence="1">
    <location>
        <begin position="11"/>
        <end position="71"/>
    </location>
</feature>
<feature type="DNA-binding region" description="H-T-H motif" evidence="1">
    <location>
        <begin position="34"/>
        <end position="53"/>
    </location>
</feature>
<feature type="sequence conflict" description="In Ref. 1; CAA51589." evidence="2" ref="1">
    <original>D</original>
    <variation>S</variation>
    <location>
        <position position="162"/>
    </location>
</feature>
<evidence type="ECO:0000255" key="1">
    <source>
        <dbReference type="PROSITE-ProRule" id="PRU00335"/>
    </source>
</evidence>
<evidence type="ECO:0000305" key="2"/>
<proteinExistence type="predicted"/>
<gene>
    <name type="primary">ywcC</name>
    <name type="ordered locus">BSU38220</name>
    <name type="ORF">ipa-33d</name>
</gene>
<keyword id="KW-0238">DNA-binding</keyword>
<keyword id="KW-1185">Reference proteome</keyword>
<keyword id="KW-0678">Repressor</keyword>
<keyword id="KW-0804">Transcription</keyword>
<keyword id="KW-0805">Transcription regulation</keyword>
<protein>
    <recommendedName>
        <fullName>Uncharacterized HTH-type transcriptional regulator YwcC</fullName>
    </recommendedName>
</protein>
<organism>
    <name type="scientific">Bacillus subtilis (strain 168)</name>
    <dbReference type="NCBI Taxonomy" id="224308"/>
    <lineage>
        <taxon>Bacteria</taxon>
        <taxon>Bacillati</taxon>
        <taxon>Bacillota</taxon>
        <taxon>Bacilli</taxon>
        <taxon>Bacillales</taxon>
        <taxon>Bacillaceae</taxon>
        <taxon>Bacillus</taxon>
    </lineage>
</organism>
<name>YWCC_BACSU</name>
<accession>P39601</accession>